<accession>P0C2F8</accession>
<accession>Q9SGW1</accession>
<proteinExistence type="predicted"/>
<dbReference type="EMBL" id="AC009519">
    <property type="protein sequence ID" value="AAF19673.1"/>
    <property type="status" value="ALT_SEQ"/>
    <property type="molecule type" value="Genomic_DNA"/>
</dbReference>
<dbReference type="EMBL" id="CP002684">
    <property type="protein sequence ID" value="AEE34251.1"/>
    <property type="molecule type" value="Genomic_DNA"/>
</dbReference>
<dbReference type="EMBL" id="CP002684">
    <property type="protein sequence ID" value="ANM60857.1"/>
    <property type="molecule type" value="Genomic_DNA"/>
</dbReference>
<dbReference type="PIR" id="A96669">
    <property type="entry name" value="A96669"/>
</dbReference>
<dbReference type="RefSeq" id="NP_001319320.1">
    <property type="nucleotide sequence ID" value="NM_001334167.1"/>
</dbReference>
<dbReference type="RefSeq" id="NP_176635.1">
    <property type="nucleotide sequence ID" value="NM_105129.2"/>
</dbReference>
<dbReference type="FunCoup" id="P0C2F8">
    <property type="interactions" value="2"/>
</dbReference>
<dbReference type="STRING" id="3702.P0C2F8"/>
<dbReference type="PaxDb" id="3702-AT1G64540.1"/>
<dbReference type="EnsemblPlants" id="AT1G64540.1">
    <property type="protein sequence ID" value="AT1G64540.1"/>
    <property type="gene ID" value="AT1G64540"/>
</dbReference>
<dbReference type="EnsemblPlants" id="AT1G64540.2">
    <property type="protein sequence ID" value="AT1G64540.2"/>
    <property type="gene ID" value="AT1G64540"/>
</dbReference>
<dbReference type="GeneID" id="842762"/>
<dbReference type="Gramene" id="AT1G64540.1">
    <property type="protein sequence ID" value="AT1G64540.1"/>
    <property type="gene ID" value="AT1G64540"/>
</dbReference>
<dbReference type="Gramene" id="AT1G64540.2">
    <property type="protein sequence ID" value="AT1G64540.2"/>
    <property type="gene ID" value="AT1G64540"/>
</dbReference>
<dbReference type="KEGG" id="ath:AT1G64540"/>
<dbReference type="Araport" id="AT1G64540"/>
<dbReference type="TAIR" id="AT1G64540"/>
<dbReference type="HOGENOM" id="CLU_010721_7_1_1"/>
<dbReference type="InParanoid" id="P0C2F8"/>
<dbReference type="OMA" id="CACISER"/>
<dbReference type="PhylomeDB" id="P0C2F8"/>
<dbReference type="PRO" id="PR:P0C2F8"/>
<dbReference type="Proteomes" id="UP000006548">
    <property type="component" value="Chromosome 1"/>
</dbReference>
<dbReference type="ExpressionAtlas" id="P0C2F8">
    <property type="expression patterns" value="baseline and differential"/>
</dbReference>
<dbReference type="CDD" id="cd22160">
    <property type="entry name" value="F-box_AtFBL13-like"/>
    <property type="match status" value="1"/>
</dbReference>
<dbReference type="Gene3D" id="1.20.1280.50">
    <property type="match status" value="1"/>
</dbReference>
<dbReference type="InterPro" id="IPR036047">
    <property type="entry name" value="F-box-like_dom_sf"/>
</dbReference>
<dbReference type="InterPro" id="IPR053781">
    <property type="entry name" value="F-box_AtFBL13-like"/>
</dbReference>
<dbReference type="InterPro" id="IPR001810">
    <property type="entry name" value="F-box_dom"/>
</dbReference>
<dbReference type="InterPro" id="IPR006566">
    <property type="entry name" value="FBD"/>
</dbReference>
<dbReference type="InterPro" id="IPR055294">
    <property type="entry name" value="FBL60-like"/>
</dbReference>
<dbReference type="InterPro" id="IPR055411">
    <property type="entry name" value="LRR_FXL15/At3g58940/PEG3-like"/>
</dbReference>
<dbReference type="PANTHER" id="PTHR31293:SF27">
    <property type="entry name" value="BNACNNG35480D PROTEIN"/>
    <property type="match status" value="1"/>
</dbReference>
<dbReference type="PANTHER" id="PTHR31293">
    <property type="entry name" value="RNI-LIKE SUPERFAMILY PROTEIN"/>
    <property type="match status" value="1"/>
</dbReference>
<dbReference type="Pfam" id="PF00646">
    <property type="entry name" value="F-box"/>
    <property type="match status" value="1"/>
</dbReference>
<dbReference type="Pfam" id="PF24758">
    <property type="entry name" value="LRR_At5g56370"/>
    <property type="match status" value="1"/>
</dbReference>
<dbReference type="SMART" id="SM00579">
    <property type="entry name" value="FBD"/>
    <property type="match status" value="1"/>
</dbReference>
<dbReference type="SMART" id="SM00256">
    <property type="entry name" value="FBOX"/>
    <property type="match status" value="1"/>
</dbReference>
<dbReference type="SUPFAM" id="SSF81383">
    <property type="entry name" value="F-box domain"/>
    <property type="match status" value="1"/>
</dbReference>
<dbReference type="SUPFAM" id="SSF52047">
    <property type="entry name" value="RNI-like"/>
    <property type="match status" value="1"/>
</dbReference>
<dbReference type="PROSITE" id="PS50181">
    <property type="entry name" value="FBOX"/>
    <property type="match status" value="1"/>
</dbReference>
<protein>
    <recommendedName>
        <fullName>Putative F-box protein At1g64540</fullName>
    </recommendedName>
</protein>
<feature type="chain" id="PRO_0000274948" description="Putative F-box protein At1g64540">
    <location>
        <begin position="1"/>
        <end position="444"/>
    </location>
</feature>
<feature type="domain" description="F-box" evidence="1">
    <location>
        <begin position="4"/>
        <end position="50"/>
    </location>
</feature>
<evidence type="ECO:0000255" key="1">
    <source>
        <dbReference type="PROSITE-ProRule" id="PRU00080"/>
    </source>
</evidence>
<evidence type="ECO:0000305" key="2"/>
<reference key="1">
    <citation type="journal article" date="2000" name="Nature">
        <title>Sequence and analysis of chromosome 1 of the plant Arabidopsis thaliana.</title>
        <authorList>
            <person name="Theologis A."/>
            <person name="Ecker J.R."/>
            <person name="Palm C.J."/>
            <person name="Federspiel N.A."/>
            <person name="Kaul S."/>
            <person name="White O."/>
            <person name="Alonso J."/>
            <person name="Altafi H."/>
            <person name="Araujo R."/>
            <person name="Bowman C.L."/>
            <person name="Brooks S.Y."/>
            <person name="Buehler E."/>
            <person name="Chan A."/>
            <person name="Chao Q."/>
            <person name="Chen H."/>
            <person name="Cheuk R.F."/>
            <person name="Chin C.W."/>
            <person name="Chung M.K."/>
            <person name="Conn L."/>
            <person name="Conway A.B."/>
            <person name="Conway A.R."/>
            <person name="Creasy T.H."/>
            <person name="Dewar K."/>
            <person name="Dunn P."/>
            <person name="Etgu P."/>
            <person name="Feldblyum T.V."/>
            <person name="Feng J.-D."/>
            <person name="Fong B."/>
            <person name="Fujii C.Y."/>
            <person name="Gill J.E."/>
            <person name="Goldsmith A.D."/>
            <person name="Haas B."/>
            <person name="Hansen N.F."/>
            <person name="Hughes B."/>
            <person name="Huizar L."/>
            <person name="Hunter J.L."/>
            <person name="Jenkins J."/>
            <person name="Johnson-Hopson C."/>
            <person name="Khan S."/>
            <person name="Khaykin E."/>
            <person name="Kim C.J."/>
            <person name="Koo H.L."/>
            <person name="Kremenetskaia I."/>
            <person name="Kurtz D.B."/>
            <person name="Kwan A."/>
            <person name="Lam B."/>
            <person name="Langin-Hooper S."/>
            <person name="Lee A."/>
            <person name="Lee J.M."/>
            <person name="Lenz C.A."/>
            <person name="Li J.H."/>
            <person name="Li Y.-P."/>
            <person name="Lin X."/>
            <person name="Liu S.X."/>
            <person name="Liu Z.A."/>
            <person name="Luros J.S."/>
            <person name="Maiti R."/>
            <person name="Marziali A."/>
            <person name="Militscher J."/>
            <person name="Miranda M."/>
            <person name="Nguyen M."/>
            <person name="Nierman W.C."/>
            <person name="Osborne B.I."/>
            <person name="Pai G."/>
            <person name="Peterson J."/>
            <person name="Pham P.K."/>
            <person name="Rizzo M."/>
            <person name="Rooney T."/>
            <person name="Rowley D."/>
            <person name="Sakano H."/>
            <person name="Salzberg S.L."/>
            <person name="Schwartz J.R."/>
            <person name="Shinn P."/>
            <person name="Southwick A.M."/>
            <person name="Sun H."/>
            <person name="Tallon L.J."/>
            <person name="Tambunga G."/>
            <person name="Toriumi M.J."/>
            <person name="Town C.D."/>
            <person name="Utterback T."/>
            <person name="Van Aken S."/>
            <person name="Vaysberg M."/>
            <person name="Vysotskaia V.S."/>
            <person name="Walker M."/>
            <person name="Wu D."/>
            <person name="Yu G."/>
            <person name="Fraser C.M."/>
            <person name="Venter J.C."/>
            <person name="Davis R.W."/>
        </authorList>
    </citation>
    <scope>NUCLEOTIDE SEQUENCE [LARGE SCALE GENOMIC DNA]</scope>
    <source>
        <strain>cv. Columbia</strain>
    </source>
</reference>
<reference key="2">
    <citation type="journal article" date="2017" name="Plant J.">
        <title>Araport11: a complete reannotation of the Arabidopsis thaliana reference genome.</title>
        <authorList>
            <person name="Cheng C.Y."/>
            <person name="Krishnakumar V."/>
            <person name="Chan A.P."/>
            <person name="Thibaud-Nissen F."/>
            <person name="Schobel S."/>
            <person name="Town C.D."/>
        </authorList>
    </citation>
    <scope>GENOME REANNOTATION</scope>
    <source>
        <strain>cv. Columbia</strain>
    </source>
</reference>
<keyword id="KW-1185">Reference proteome</keyword>
<gene>
    <name type="ordered locus">At1g64540</name>
    <name type="ORF">F1N19.11</name>
</gene>
<name>FB71_ARATH</name>
<organism>
    <name type="scientific">Arabidopsis thaliana</name>
    <name type="common">Mouse-ear cress</name>
    <dbReference type="NCBI Taxonomy" id="3702"/>
    <lineage>
        <taxon>Eukaryota</taxon>
        <taxon>Viridiplantae</taxon>
        <taxon>Streptophyta</taxon>
        <taxon>Embryophyta</taxon>
        <taxon>Tracheophyta</taxon>
        <taxon>Spermatophyta</taxon>
        <taxon>Magnoliopsida</taxon>
        <taxon>eudicotyledons</taxon>
        <taxon>Gunneridae</taxon>
        <taxon>Pentapetalae</taxon>
        <taxon>rosids</taxon>
        <taxon>malvids</taxon>
        <taxon>Brassicales</taxon>
        <taxon>Brassicaceae</taxon>
        <taxon>Camelineae</taxon>
        <taxon>Arabidopsis</taxon>
    </lineage>
</organism>
<comment type="sequence caution" evidence="2">
    <conflict type="erroneous gene model prediction">
        <sequence resource="EMBL-CDS" id="AAF19673"/>
    </conflict>
    <text>The predicted gene At1g64540 has been split into 2 genes: At1g64540 and At1g64550.</text>
</comment>
<sequence>MNPREFISNLPDEILGKILSLLPTKLGVSTSVLSKRWRNLILLVDNFDLEDSSTSGFSAFLEQTVARLNTCPIKRLSLNGRHYRFSSADSWISTAFERGCLELHLQSQYLDTGILSSNTLVKLTLSDQIYLQGLVPHDGTVFFPALKTLSLGAVVADRDVYESLISGCPVLDELSIRDGCDDPPTWKKSVVNKSVKRLTVSFHHPMSAWAYEDNVWFKTQSLVFLDYSAFVSQGYTIVDRMDSLVEARLDLRLWVSTDSYDSDYEDKDFDVYRPYDVFGDVTSLVSGIRKVKTLHLSPDSLEAFFFCCNHMPVFNNLRNLSLESDEEKGWQALPLLLNNSLNLHTLSIKGLVHRVTSRCGDACACISERKTGMCCLSACRIKVLEITGYGGSFIELKQMRHFLGKLQCLETVRIGVERDGNNEHLRANLSSLHRASSECNIQFI</sequence>